<proteinExistence type="inferred from homology"/>
<keyword id="KW-0496">Mitochondrion</keyword>
<keyword id="KW-1185">Reference proteome</keyword>
<keyword id="KW-0809">Transit peptide</keyword>
<evidence type="ECO:0000250" key="1"/>
<evidence type="ECO:0000255" key="2"/>
<evidence type="ECO:0000256" key="3">
    <source>
        <dbReference type="SAM" id="MobiDB-lite"/>
    </source>
</evidence>
<evidence type="ECO:0000305" key="4"/>
<name>RRG9_ZYGRC</name>
<gene>
    <name type="primary">RRG9</name>
    <name type="ordered locus">ZYRO0C10582g</name>
</gene>
<organism>
    <name type="scientific">Zygosaccharomyces rouxii (strain ATCC 2623 / CBS 732 / NBRC 1130 / NCYC 568 / NRRL Y-229)</name>
    <dbReference type="NCBI Taxonomy" id="559307"/>
    <lineage>
        <taxon>Eukaryota</taxon>
        <taxon>Fungi</taxon>
        <taxon>Dikarya</taxon>
        <taxon>Ascomycota</taxon>
        <taxon>Saccharomycotina</taxon>
        <taxon>Saccharomycetes</taxon>
        <taxon>Saccharomycetales</taxon>
        <taxon>Saccharomycetaceae</taxon>
        <taxon>Zygosaccharomyces</taxon>
    </lineage>
</organism>
<accession>C5DTR1</accession>
<protein>
    <recommendedName>
        <fullName>Required for respiratory growth protein 9, mitochondrial</fullName>
    </recommendedName>
</protein>
<comment type="function">
    <text evidence="1">Required for respiratory activity and maintenance and expression of the mitochondrial genome.</text>
</comment>
<comment type="subcellular location">
    <subcellularLocation>
        <location evidence="1">Mitochondrion</location>
    </subcellularLocation>
</comment>
<comment type="similarity">
    <text evidence="4">Belongs to the RRG9 family.</text>
</comment>
<feature type="transit peptide" description="Mitochondrion" evidence="2">
    <location>
        <begin position="1"/>
        <end position="42"/>
    </location>
</feature>
<feature type="chain" id="PRO_0000407975" description="Required for respiratory growth protein 9, mitochondrial">
    <location>
        <begin position="43"/>
        <end position="224"/>
    </location>
</feature>
<feature type="region of interest" description="Disordered" evidence="3">
    <location>
        <begin position="53"/>
        <end position="72"/>
    </location>
</feature>
<feature type="region of interest" description="Disordered" evidence="3">
    <location>
        <begin position="186"/>
        <end position="224"/>
    </location>
</feature>
<feature type="compositionally biased region" description="Basic and acidic residues" evidence="3">
    <location>
        <begin position="60"/>
        <end position="72"/>
    </location>
</feature>
<feature type="compositionally biased region" description="Polar residues" evidence="3">
    <location>
        <begin position="186"/>
        <end position="200"/>
    </location>
</feature>
<feature type="compositionally biased region" description="Basic residues" evidence="3">
    <location>
        <begin position="201"/>
        <end position="210"/>
    </location>
</feature>
<feature type="compositionally biased region" description="Basic and acidic residues" evidence="3">
    <location>
        <begin position="214"/>
        <end position="224"/>
    </location>
</feature>
<reference key="1">
    <citation type="journal article" date="2009" name="Genome Res.">
        <title>Comparative genomics of protoploid Saccharomycetaceae.</title>
        <authorList>
            <consortium name="The Genolevures Consortium"/>
            <person name="Souciet J.-L."/>
            <person name="Dujon B."/>
            <person name="Gaillardin C."/>
            <person name="Johnston M."/>
            <person name="Baret P.V."/>
            <person name="Cliften P."/>
            <person name="Sherman D.J."/>
            <person name="Weissenbach J."/>
            <person name="Westhof E."/>
            <person name="Wincker P."/>
            <person name="Jubin C."/>
            <person name="Poulain J."/>
            <person name="Barbe V."/>
            <person name="Segurens B."/>
            <person name="Artiguenave F."/>
            <person name="Anthouard V."/>
            <person name="Vacherie B."/>
            <person name="Val M.-E."/>
            <person name="Fulton R.S."/>
            <person name="Minx P."/>
            <person name="Wilson R."/>
            <person name="Durrens P."/>
            <person name="Jean G."/>
            <person name="Marck C."/>
            <person name="Martin T."/>
            <person name="Nikolski M."/>
            <person name="Rolland T."/>
            <person name="Seret M.-L."/>
            <person name="Casaregola S."/>
            <person name="Despons L."/>
            <person name="Fairhead C."/>
            <person name="Fischer G."/>
            <person name="Lafontaine I."/>
            <person name="Leh V."/>
            <person name="Lemaire M."/>
            <person name="de Montigny J."/>
            <person name="Neuveglise C."/>
            <person name="Thierry A."/>
            <person name="Blanc-Lenfle I."/>
            <person name="Bleykasten C."/>
            <person name="Diffels J."/>
            <person name="Fritsch E."/>
            <person name="Frangeul L."/>
            <person name="Goeffon A."/>
            <person name="Jauniaux N."/>
            <person name="Kachouri-Lafond R."/>
            <person name="Payen C."/>
            <person name="Potier S."/>
            <person name="Pribylova L."/>
            <person name="Ozanne C."/>
            <person name="Richard G.-F."/>
            <person name="Sacerdot C."/>
            <person name="Straub M.-L."/>
            <person name="Talla E."/>
        </authorList>
    </citation>
    <scope>NUCLEOTIDE SEQUENCE [LARGE SCALE GENOMIC DNA]</scope>
    <source>
        <strain>ATCC 2623 / CBS 732 / BCRC 21506 / NBRC 1130 / NCYC 568 / NRRL Y-229</strain>
    </source>
</reference>
<dbReference type="EMBL" id="CU928175">
    <property type="protein sequence ID" value="CAR27172.1"/>
    <property type="molecule type" value="Genomic_DNA"/>
</dbReference>
<dbReference type="RefSeq" id="XP_002496105.1">
    <property type="nucleotide sequence ID" value="XM_002496060.1"/>
</dbReference>
<dbReference type="SMR" id="C5DTR1"/>
<dbReference type="FunCoup" id="C5DTR1">
    <property type="interactions" value="43"/>
</dbReference>
<dbReference type="STRING" id="559307.C5DTR1"/>
<dbReference type="GeneID" id="8203320"/>
<dbReference type="KEGG" id="zro:ZYRO0C10582g"/>
<dbReference type="HOGENOM" id="CLU_100293_0_0_1"/>
<dbReference type="InParanoid" id="C5DTR1"/>
<dbReference type="Proteomes" id="UP000008536">
    <property type="component" value="Chromosome C"/>
</dbReference>
<dbReference type="GO" id="GO:0005739">
    <property type="term" value="C:mitochondrion"/>
    <property type="evidence" value="ECO:0007669"/>
    <property type="project" value="UniProtKB-SubCell"/>
</dbReference>
<dbReference type="GO" id="GO:0005634">
    <property type="term" value="C:nucleus"/>
    <property type="evidence" value="ECO:0007669"/>
    <property type="project" value="TreeGrafter"/>
</dbReference>
<dbReference type="InterPro" id="IPR010487">
    <property type="entry name" value="NGRN/Rrg9"/>
</dbReference>
<dbReference type="PANTHER" id="PTHR13475">
    <property type="entry name" value="NEUGRIN"/>
    <property type="match status" value="1"/>
</dbReference>
<dbReference type="PANTHER" id="PTHR13475:SF3">
    <property type="entry name" value="NEUGRIN"/>
    <property type="match status" value="1"/>
</dbReference>
<dbReference type="Pfam" id="PF06413">
    <property type="entry name" value="Neugrin"/>
    <property type="match status" value="1"/>
</dbReference>
<sequence>MIPFTSGKCYDRFPSMLFTYRVVIGRSFCQAHRGSLMAENRSKGAKNAIKVVHESSLTSKEQREKSKDDETPAWKIQKMAISKKLKGQRWNPSKRLSREEMEGLRLIKSQFPHLNASELGQQFKVSPEVVKRILSSKWRPTEDELGKLQDRWKQRGERIKQMFDSHQIQEKPLVVPKRIVINTLGSSPSVVATTRPSKNAKSNKRTKNKLHLLQQREHDHEHSE</sequence>